<organism>
    <name type="scientific">Homo sapiens</name>
    <name type="common">Human</name>
    <dbReference type="NCBI Taxonomy" id="9606"/>
    <lineage>
        <taxon>Eukaryota</taxon>
        <taxon>Metazoa</taxon>
        <taxon>Chordata</taxon>
        <taxon>Craniata</taxon>
        <taxon>Vertebrata</taxon>
        <taxon>Euteleostomi</taxon>
        <taxon>Mammalia</taxon>
        <taxon>Eutheria</taxon>
        <taxon>Euarchontoglires</taxon>
        <taxon>Primates</taxon>
        <taxon>Haplorrhini</taxon>
        <taxon>Catarrhini</taxon>
        <taxon>Hominidae</taxon>
        <taxon>Homo</taxon>
    </lineage>
</organism>
<comment type="function">
    <text>F-actin-capping proteins bind in a Ca(2+)-independent manner to the fast growing ends of actin filaments (barbed end) thereby blocking the exchange of subunits at these ends. Unlike other capping proteins (such as gelsolin and severin), these proteins do not sever actin filaments.</text>
</comment>
<comment type="subunit">
    <text evidence="2 3 4">Component of the F-actin capping complex, composed of a heterodimer of an alpha and a beta subunit. Component of the WASH complex, composed of F-actin-capping protein subunit alpha (CAPZA1, CAPZA2 or CAPZA3), F-actin-capping protein subunit beta (CAPZB), WASH (WASHC1, WASH2P, WASH3P, WASH4P, WASH5P or WASH6P), WASHC2 (WASHC2A or WASHC2C), WASHC3, WASHC4 and WASHC5. Interacts with RCSD1/CAPZIP. Directly interacts with CRACD; this interaction decreases binding to actin (PubMed:30361697).</text>
</comment>
<comment type="alternative products">
    <event type="alternative splicing"/>
    <isoform>
        <id>P47755-1</id>
        <name>1</name>
        <sequence type="displayed"/>
    </isoform>
    <isoform>
        <id>P47755-2</id>
        <name>2</name>
        <sequence type="described" ref="VSP_053871 VSP_053872"/>
    </isoform>
</comment>
<comment type="similarity">
    <text evidence="7">Belongs to the F-actin-capping protein alpha subunit family.</text>
</comment>
<keyword id="KW-0007">Acetylation</keyword>
<keyword id="KW-0117">Actin capping</keyword>
<keyword id="KW-0009">Actin-binding</keyword>
<keyword id="KW-0025">Alternative splicing</keyword>
<keyword id="KW-0903">Direct protein sequencing</keyword>
<keyword id="KW-0597">Phosphoprotein</keyword>
<keyword id="KW-1267">Proteomics identification</keyword>
<keyword id="KW-1185">Reference proteome</keyword>
<feature type="initiator methionine" description="Removed" evidence="1 5 8 9 10">
    <location>
        <position position="1"/>
    </location>
</feature>
<feature type="chain" id="PRO_0000208627" description="F-actin-capping protein subunit alpha-2">
    <location>
        <begin position="2"/>
        <end position="286"/>
    </location>
</feature>
<feature type="modified residue" description="N-acetylalanine" evidence="5 8 9 10">
    <location>
        <position position="2"/>
    </location>
</feature>
<feature type="modified residue" description="Phosphoserine" evidence="11">
    <location>
        <position position="9"/>
    </location>
</feature>
<feature type="splice variant" id="VSP_053871" description="In isoform 2." evidence="6">
    <original>VYGKKIDGQQTIIACIESHQFQAKNFWNGR</original>
    <variation>EWSLEVRMEVYNHSFNHSSGWHLENSGSLL</variation>
    <location>
        <begin position="143"/>
        <end position="172"/>
    </location>
</feature>
<feature type="splice variant" id="VSP_053872" description="In isoform 2." evidence="6">
    <location>
        <begin position="173"/>
        <end position="286"/>
    </location>
</feature>
<sequence length="286" mass="32949">MADLEEQLSDEEKVRIAAKFIIHAPPGEFNEVFNDVRLLLNNDNLLREGAAHAFAQYNLDQFTPVKIEGYEDQVLITEHGDLGNGKFLDPKNRICFKFDHLRKEATDPRPCEVENAVESWRTSVETALRAYVKEHYPNGVCTVYGKKIDGQQTIIACIESHQFQAKNFWNGRWRSEWKFTITPSTTQVVGILKIQVHYYEDGNVQLVSHKDIQDSLTVSNEVQTAKEFIKIVEAAENEYQTAISENYQTMSDTTFKALRRQLPVTRTKIDWNKILSYKIGKEMQNA</sequence>
<gene>
    <name type="primary">CAPZA2</name>
</gene>
<evidence type="ECO:0000269" key="1">
    <source>
    </source>
</evidence>
<evidence type="ECO:0000269" key="2">
    <source>
    </source>
</evidence>
<evidence type="ECO:0000269" key="3">
    <source>
    </source>
</evidence>
<evidence type="ECO:0000269" key="4">
    <source>
    </source>
</evidence>
<evidence type="ECO:0000269" key="5">
    <source ref="8"/>
</evidence>
<evidence type="ECO:0000303" key="6">
    <source>
    </source>
</evidence>
<evidence type="ECO:0000305" key="7"/>
<evidence type="ECO:0007744" key="8">
    <source>
    </source>
</evidence>
<evidence type="ECO:0007744" key="9">
    <source>
    </source>
</evidence>
<evidence type="ECO:0007744" key="10">
    <source>
    </source>
</evidence>
<evidence type="ECO:0007744" key="11">
    <source>
    </source>
</evidence>
<proteinExistence type="evidence at protein level"/>
<protein>
    <recommendedName>
        <fullName>F-actin-capping protein subunit alpha-2</fullName>
    </recommendedName>
    <alternativeName>
        <fullName>CapZ alpha-2</fullName>
    </alternativeName>
</protein>
<name>CAZA2_HUMAN</name>
<reference key="1">
    <citation type="journal article" date="1995" name="J. Biol. Chem.">
        <title>Sequence analysis and chromosomal localization of human Cap Z. Conserved residues within the actin-binding domain may link Cap Z to gelsolin/severin and profilin protein families.</title>
        <authorList>
            <person name="Barron-Casella E.A."/>
            <person name="Torres M.A."/>
            <person name="Scherer S.W."/>
            <person name="Heng H.H.Q."/>
            <person name="Tsui L.-C."/>
            <person name="Casella J.F."/>
        </authorList>
    </citation>
    <scope>NUCLEOTIDE SEQUENCE [MRNA] (ISOFORM 1)</scope>
    <source>
        <tissue>Retina</tissue>
    </source>
</reference>
<reference key="2">
    <citation type="submission" date="2003-05" db="EMBL/GenBank/DDBJ databases">
        <title>Cloning of human full-length CDSs in BD Creator(TM) system donor vector.</title>
        <authorList>
            <person name="Kalnine N."/>
            <person name="Chen X."/>
            <person name="Rolfs A."/>
            <person name="Halleck A."/>
            <person name="Hines L."/>
            <person name="Eisenstein S."/>
            <person name="Koundinya M."/>
            <person name="Raphael J."/>
            <person name="Moreira D."/>
            <person name="Kelley T."/>
            <person name="LaBaer J."/>
            <person name="Lin Y."/>
            <person name="Phelan M."/>
            <person name="Farmer A."/>
        </authorList>
    </citation>
    <scope>NUCLEOTIDE SEQUENCE [LARGE SCALE MRNA] (ISOFORM 1)</scope>
</reference>
<reference key="3">
    <citation type="journal article" date="2004" name="Nat. Genet.">
        <title>Complete sequencing and characterization of 21,243 full-length human cDNAs.</title>
        <authorList>
            <person name="Ota T."/>
            <person name="Suzuki Y."/>
            <person name="Nishikawa T."/>
            <person name="Otsuki T."/>
            <person name="Sugiyama T."/>
            <person name="Irie R."/>
            <person name="Wakamatsu A."/>
            <person name="Hayashi K."/>
            <person name="Sato H."/>
            <person name="Nagai K."/>
            <person name="Kimura K."/>
            <person name="Makita H."/>
            <person name="Sekine M."/>
            <person name="Obayashi M."/>
            <person name="Nishi T."/>
            <person name="Shibahara T."/>
            <person name="Tanaka T."/>
            <person name="Ishii S."/>
            <person name="Yamamoto J."/>
            <person name="Saito K."/>
            <person name="Kawai Y."/>
            <person name="Isono Y."/>
            <person name="Nakamura Y."/>
            <person name="Nagahari K."/>
            <person name="Murakami K."/>
            <person name="Yasuda T."/>
            <person name="Iwayanagi T."/>
            <person name="Wagatsuma M."/>
            <person name="Shiratori A."/>
            <person name="Sudo H."/>
            <person name="Hosoiri T."/>
            <person name="Kaku Y."/>
            <person name="Kodaira H."/>
            <person name="Kondo H."/>
            <person name="Sugawara M."/>
            <person name="Takahashi M."/>
            <person name="Kanda K."/>
            <person name="Yokoi T."/>
            <person name="Furuya T."/>
            <person name="Kikkawa E."/>
            <person name="Omura Y."/>
            <person name="Abe K."/>
            <person name="Kamihara K."/>
            <person name="Katsuta N."/>
            <person name="Sato K."/>
            <person name="Tanikawa M."/>
            <person name="Yamazaki M."/>
            <person name="Ninomiya K."/>
            <person name="Ishibashi T."/>
            <person name="Yamashita H."/>
            <person name="Murakawa K."/>
            <person name="Fujimori K."/>
            <person name="Tanai H."/>
            <person name="Kimata M."/>
            <person name="Watanabe M."/>
            <person name="Hiraoka S."/>
            <person name="Chiba Y."/>
            <person name="Ishida S."/>
            <person name="Ono Y."/>
            <person name="Takiguchi S."/>
            <person name="Watanabe S."/>
            <person name="Yosida M."/>
            <person name="Hotuta T."/>
            <person name="Kusano J."/>
            <person name="Kanehori K."/>
            <person name="Takahashi-Fujii A."/>
            <person name="Hara H."/>
            <person name="Tanase T.-O."/>
            <person name="Nomura Y."/>
            <person name="Togiya S."/>
            <person name="Komai F."/>
            <person name="Hara R."/>
            <person name="Takeuchi K."/>
            <person name="Arita M."/>
            <person name="Imose N."/>
            <person name="Musashino K."/>
            <person name="Yuuki H."/>
            <person name="Oshima A."/>
            <person name="Sasaki N."/>
            <person name="Aotsuka S."/>
            <person name="Yoshikawa Y."/>
            <person name="Matsunawa H."/>
            <person name="Ichihara T."/>
            <person name="Shiohata N."/>
            <person name="Sano S."/>
            <person name="Moriya S."/>
            <person name="Momiyama H."/>
            <person name="Satoh N."/>
            <person name="Takami S."/>
            <person name="Terashima Y."/>
            <person name="Suzuki O."/>
            <person name="Nakagawa S."/>
            <person name="Senoh A."/>
            <person name="Mizoguchi H."/>
            <person name="Goto Y."/>
            <person name="Shimizu F."/>
            <person name="Wakebe H."/>
            <person name="Hishigaki H."/>
            <person name="Watanabe T."/>
            <person name="Sugiyama A."/>
            <person name="Takemoto M."/>
            <person name="Kawakami B."/>
            <person name="Yamazaki M."/>
            <person name="Watanabe K."/>
            <person name="Kumagai A."/>
            <person name="Itakura S."/>
            <person name="Fukuzumi Y."/>
            <person name="Fujimori Y."/>
            <person name="Komiyama M."/>
            <person name="Tashiro H."/>
            <person name="Tanigami A."/>
            <person name="Fujiwara T."/>
            <person name="Ono T."/>
            <person name="Yamada K."/>
            <person name="Fujii Y."/>
            <person name="Ozaki K."/>
            <person name="Hirao M."/>
            <person name="Ohmori Y."/>
            <person name="Kawabata A."/>
            <person name="Hikiji T."/>
            <person name="Kobatake N."/>
            <person name="Inagaki H."/>
            <person name="Ikema Y."/>
            <person name="Okamoto S."/>
            <person name="Okitani R."/>
            <person name="Kawakami T."/>
            <person name="Noguchi S."/>
            <person name="Itoh T."/>
            <person name="Shigeta K."/>
            <person name="Senba T."/>
            <person name="Matsumura K."/>
            <person name="Nakajima Y."/>
            <person name="Mizuno T."/>
            <person name="Morinaga M."/>
            <person name="Sasaki M."/>
            <person name="Togashi T."/>
            <person name="Oyama M."/>
            <person name="Hata H."/>
            <person name="Watanabe M."/>
            <person name="Komatsu T."/>
            <person name="Mizushima-Sugano J."/>
            <person name="Satoh T."/>
            <person name="Shirai Y."/>
            <person name="Takahashi Y."/>
            <person name="Nakagawa K."/>
            <person name="Okumura K."/>
            <person name="Nagase T."/>
            <person name="Nomura N."/>
            <person name="Kikuchi H."/>
            <person name="Masuho Y."/>
            <person name="Yamashita R."/>
            <person name="Nakai K."/>
            <person name="Yada T."/>
            <person name="Nakamura Y."/>
            <person name="Ohara O."/>
            <person name="Isogai T."/>
            <person name="Sugano S."/>
        </authorList>
    </citation>
    <scope>NUCLEOTIDE SEQUENCE [LARGE SCALE MRNA] (ISOFORM 2)</scope>
    <source>
        <tissue>Amygdala</tissue>
    </source>
</reference>
<reference key="4">
    <citation type="journal article" date="2003" name="Nature">
        <title>The DNA sequence of human chromosome 7.</title>
        <authorList>
            <person name="Hillier L.W."/>
            <person name="Fulton R.S."/>
            <person name="Fulton L.A."/>
            <person name="Graves T.A."/>
            <person name="Pepin K.H."/>
            <person name="Wagner-McPherson C."/>
            <person name="Layman D."/>
            <person name="Maas J."/>
            <person name="Jaeger S."/>
            <person name="Walker R."/>
            <person name="Wylie K."/>
            <person name="Sekhon M."/>
            <person name="Becker M.C."/>
            <person name="O'Laughlin M.D."/>
            <person name="Schaller M.E."/>
            <person name="Fewell G.A."/>
            <person name="Delehaunty K.D."/>
            <person name="Miner T.L."/>
            <person name="Nash W.E."/>
            <person name="Cordes M."/>
            <person name="Du H."/>
            <person name="Sun H."/>
            <person name="Edwards J."/>
            <person name="Bradshaw-Cordum H."/>
            <person name="Ali J."/>
            <person name="Andrews S."/>
            <person name="Isak A."/>
            <person name="Vanbrunt A."/>
            <person name="Nguyen C."/>
            <person name="Du F."/>
            <person name="Lamar B."/>
            <person name="Courtney L."/>
            <person name="Kalicki J."/>
            <person name="Ozersky P."/>
            <person name="Bielicki L."/>
            <person name="Scott K."/>
            <person name="Holmes A."/>
            <person name="Harkins R."/>
            <person name="Harris A."/>
            <person name="Strong C.M."/>
            <person name="Hou S."/>
            <person name="Tomlinson C."/>
            <person name="Dauphin-Kohlberg S."/>
            <person name="Kozlowicz-Reilly A."/>
            <person name="Leonard S."/>
            <person name="Rohlfing T."/>
            <person name="Rock S.M."/>
            <person name="Tin-Wollam A.-M."/>
            <person name="Abbott A."/>
            <person name="Minx P."/>
            <person name="Maupin R."/>
            <person name="Strowmatt C."/>
            <person name="Latreille P."/>
            <person name="Miller N."/>
            <person name="Johnson D."/>
            <person name="Murray J."/>
            <person name="Woessner J.P."/>
            <person name="Wendl M.C."/>
            <person name="Yang S.-P."/>
            <person name="Schultz B.R."/>
            <person name="Wallis J.W."/>
            <person name="Spieth J."/>
            <person name="Bieri T.A."/>
            <person name="Nelson J.O."/>
            <person name="Berkowicz N."/>
            <person name="Wohldmann P.E."/>
            <person name="Cook L.L."/>
            <person name="Hickenbotham M.T."/>
            <person name="Eldred J."/>
            <person name="Williams D."/>
            <person name="Bedell J.A."/>
            <person name="Mardis E.R."/>
            <person name="Clifton S.W."/>
            <person name="Chissoe S.L."/>
            <person name="Marra M.A."/>
            <person name="Raymond C."/>
            <person name="Haugen E."/>
            <person name="Gillett W."/>
            <person name="Zhou Y."/>
            <person name="James R."/>
            <person name="Phelps K."/>
            <person name="Iadanoto S."/>
            <person name="Bubb K."/>
            <person name="Simms E."/>
            <person name="Levy R."/>
            <person name="Clendenning J."/>
            <person name="Kaul R."/>
            <person name="Kent W.J."/>
            <person name="Furey T.S."/>
            <person name="Baertsch R.A."/>
            <person name="Brent M.R."/>
            <person name="Keibler E."/>
            <person name="Flicek P."/>
            <person name="Bork P."/>
            <person name="Suyama M."/>
            <person name="Bailey J.A."/>
            <person name="Portnoy M.E."/>
            <person name="Torrents D."/>
            <person name="Chinwalla A.T."/>
            <person name="Gish W.R."/>
            <person name="Eddy S.R."/>
            <person name="McPherson J.D."/>
            <person name="Olson M.V."/>
            <person name="Eichler E.E."/>
            <person name="Green E.D."/>
            <person name="Waterston R.H."/>
            <person name="Wilson R.K."/>
        </authorList>
    </citation>
    <scope>NUCLEOTIDE SEQUENCE [LARGE SCALE GENOMIC DNA]</scope>
</reference>
<reference key="5">
    <citation type="journal article" date="2004" name="Genome Res.">
        <title>The status, quality, and expansion of the NIH full-length cDNA project: the Mammalian Gene Collection (MGC).</title>
        <authorList>
            <consortium name="The MGC Project Team"/>
        </authorList>
    </citation>
    <scope>NUCLEOTIDE SEQUENCE [LARGE SCALE MRNA] (ISOFORM 1)</scope>
    <source>
        <tissue>Kidney</tissue>
    </source>
</reference>
<reference key="6">
    <citation type="journal article" date="1997" name="Cell Motil. Cytoskeleton">
        <title>Vertebrates have conserved capping protein alpha isoforms with specific expression patterns.</title>
        <authorList>
            <person name="Hart M.C."/>
            <person name="Korshunova Y.O."/>
            <person name="Cooper J.A."/>
        </authorList>
    </citation>
    <scope>NUCLEOTIDE SEQUENCE [MRNA] OF 3-286 (ISOFORM 1)</scope>
    <source>
        <tissue>Pancreas</tissue>
    </source>
</reference>
<reference key="7">
    <citation type="journal article" date="2003" name="Nat. Biotechnol.">
        <title>Exploring proteomes and analyzing protein processing by mass spectrometric identification of sorted N-terminal peptides.</title>
        <authorList>
            <person name="Gevaert K."/>
            <person name="Goethals M."/>
            <person name="Martens L."/>
            <person name="Van Damme J."/>
            <person name="Staes A."/>
            <person name="Thomas G.R."/>
            <person name="Vandekerckhove J."/>
        </authorList>
    </citation>
    <scope>PROTEIN SEQUENCE OF 2-15</scope>
    <source>
        <tissue>Platelet</tissue>
    </source>
</reference>
<reference key="8">
    <citation type="submission" date="2008-03" db="UniProtKB">
        <authorList>
            <person name="Bienvenut W.V."/>
            <person name="Calvo F."/>
            <person name="Matallanas D."/>
            <person name="Cooper W.N."/>
            <person name="Kolch W."/>
        </authorList>
    </citation>
    <scope>PROTEIN SEQUENCE OF 2-15; 20-66; 122-129 AND 179-210</scope>
    <scope>CLEAVAGE OF INITIATOR METHIONINE</scope>
    <scope>ACETYLATION AT ALA-2</scope>
    <scope>IDENTIFICATION BY MASS SPECTROMETRY</scope>
    <source>
        <tissue>Cervix carcinoma</tissue>
        <tissue>Mammary carcinoma</tissue>
    </source>
</reference>
<reference key="9">
    <citation type="submission" date="2008-12" db="UniProtKB">
        <authorList>
            <person name="Lubec G."/>
            <person name="Vishwanath V."/>
            <person name="Chen W.-Q."/>
            <person name="Sun Y."/>
        </authorList>
    </citation>
    <scope>PROTEIN SEQUENCE OF 20-86; 147-166 AND 179-226</scope>
    <scope>IDENTIFICATION BY MASS SPECTROMETRY</scope>
    <source>
        <tissue>Brain</tissue>
        <tissue>Cajal-Retzius cell</tissue>
        <tissue>Fetal brain cortex</tissue>
    </source>
</reference>
<reference key="10">
    <citation type="journal article" date="2005" name="Biochem. J.">
        <title>The phosphorylation of CapZ-interacting protein (CapZIP) by stress-activated protein kinases triggers its dissociation from CapZ.</title>
        <authorList>
            <person name="Eyers C.E."/>
            <person name="McNeill H."/>
            <person name="Knebel A."/>
            <person name="Morrice N."/>
            <person name="Arthur S.J.C."/>
            <person name="Cuenda A."/>
            <person name="Cohen P."/>
        </authorList>
    </citation>
    <scope>INTERACTION WITH RCSD1/CAPZIP</scope>
    <scope>IDENTIFICATION BY MASS SPECTROMETRY</scope>
</reference>
<reference key="11">
    <citation type="journal article" date="2009" name="Anal. Chem.">
        <title>Lys-N and trypsin cover complementary parts of the phosphoproteome in a refined SCX-based approach.</title>
        <authorList>
            <person name="Gauci S."/>
            <person name="Helbig A.O."/>
            <person name="Slijper M."/>
            <person name="Krijgsveld J."/>
            <person name="Heck A.J."/>
            <person name="Mohammed S."/>
        </authorList>
    </citation>
    <scope>ACETYLATION [LARGE SCALE ANALYSIS] AT ALA-2</scope>
    <scope>CLEAVAGE OF INITIATOR METHIONINE [LARGE SCALE ANALYSIS]</scope>
    <scope>IDENTIFICATION BY MASS SPECTROMETRY [LARGE SCALE ANALYSIS]</scope>
</reference>
<reference key="12">
    <citation type="journal article" date="2009" name="Dev. Cell">
        <title>The Arp2/3 activator WASH controls the fission of endosomes through a large multiprotein complex.</title>
        <authorList>
            <person name="Derivery E."/>
            <person name="Sousa C."/>
            <person name="Gautier J.J."/>
            <person name="Lombard B."/>
            <person name="Loew D."/>
            <person name="Gautreau A."/>
        </authorList>
    </citation>
    <scope>IDENTIFICATION IN THE WASH COMPLEX</scope>
</reference>
<reference key="13">
    <citation type="journal article" date="2011" name="BMC Syst. Biol.">
        <title>Initial characterization of the human central proteome.</title>
        <authorList>
            <person name="Burkard T.R."/>
            <person name="Planyavsky M."/>
            <person name="Kaupe I."/>
            <person name="Breitwieser F.P."/>
            <person name="Buerckstuemmer T."/>
            <person name="Bennett K.L."/>
            <person name="Superti-Furga G."/>
            <person name="Colinge J."/>
        </authorList>
    </citation>
    <scope>IDENTIFICATION BY MASS SPECTROMETRY [LARGE SCALE ANALYSIS]</scope>
</reference>
<reference key="14">
    <citation type="journal article" date="2012" name="Mol. Cell. Proteomics">
        <title>Comparative large-scale characterisation of plant vs. mammal proteins reveals similar and idiosyncratic N-alpha acetylation features.</title>
        <authorList>
            <person name="Bienvenut W.V."/>
            <person name="Sumpton D."/>
            <person name="Martinez A."/>
            <person name="Lilla S."/>
            <person name="Espagne C."/>
            <person name="Meinnel T."/>
            <person name="Giglione C."/>
        </authorList>
    </citation>
    <scope>ACETYLATION [LARGE SCALE ANALYSIS] AT ALA-2</scope>
    <scope>CLEAVAGE OF INITIATOR METHIONINE [LARGE SCALE ANALYSIS]</scope>
    <scope>IDENTIFICATION BY MASS SPECTROMETRY [LARGE SCALE ANALYSIS]</scope>
</reference>
<reference key="15">
    <citation type="journal article" date="2012" name="Proc. Natl. Acad. Sci. U.S.A.">
        <title>N-terminal acetylome analyses and functional insights of the N-terminal acetyltransferase NatB.</title>
        <authorList>
            <person name="Van Damme P."/>
            <person name="Lasa M."/>
            <person name="Polevoda B."/>
            <person name="Gazquez C."/>
            <person name="Elosegui-Artola A."/>
            <person name="Kim D.S."/>
            <person name="De Juan-Pardo E."/>
            <person name="Demeyer K."/>
            <person name="Hole K."/>
            <person name="Larrea E."/>
            <person name="Timmerman E."/>
            <person name="Prieto J."/>
            <person name="Arnesen T."/>
            <person name="Sherman F."/>
            <person name="Gevaert K."/>
            <person name="Aldabe R."/>
        </authorList>
    </citation>
    <scope>ACETYLATION [LARGE SCALE ANALYSIS] AT ALA-2</scope>
    <scope>CLEAVAGE OF INITIATOR METHIONINE [LARGE SCALE ANALYSIS]</scope>
    <scope>IDENTIFICATION BY MASS SPECTROMETRY [LARGE SCALE ANALYSIS]</scope>
</reference>
<reference key="16">
    <citation type="journal article" date="2013" name="J. Proteome Res.">
        <title>Toward a comprehensive characterization of a human cancer cell phosphoproteome.</title>
        <authorList>
            <person name="Zhou H."/>
            <person name="Di Palma S."/>
            <person name="Preisinger C."/>
            <person name="Peng M."/>
            <person name="Polat A.N."/>
            <person name="Heck A.J."/>
            <person name="Mohammed S."/>
        </authorList>
    </citation>
    <scope>PHOSPHORYLATION [LARGE SCALE ANALYSIS] AT SER-9</scope>
    <scope>IDENTIFICATION BY MASS SPECTROMETRY [LARGE SCALE ANALYSIS]</scope>
    <source>
        <tissue>Cervix carcinoma</tissue>
        <tissue>Erythroleukemia</tissue>
    </source>
</reference>
<reference key="17">
    <citation type="journal article" date="2014" name="J. Proteomics">
        <title>An enzyme assisted RP-RPLC approach for in-depth analysis of human liver phosphoproteome.</title>
        <authorList>
            <person name="Bian Y."/>
            <person name="Song C."/>
            <person name="Cheng K."/>
            <person name="Dong M."/>
            <person name="Wang F."/>
            <person name="Huang J."/>
            <person name="Sun D."/>
            <person name="Wang L."/>
            <person name="Ye M."/>
            <person name="Zou H."/>
        </authorList>
    </citation>
    <scope>IDENTIFICATION BY MASS SPECTROMETRY [LARGE SCALE ANALYSIS]</scope>
    <source>
        <tissue>Liver</tissue>
    </source>
</reference>
<reference key="18">
    <citation type="journal article" date="2015" name="Proteomics">
        <title>N-terminome analysis of the human mitochondrial proteome.</title>
        <authorList>
            <person name="Vaca Jacome A.S."/>
            <person name="Rabilloud T."/>
            <person name="Schaeffer-Reiss C."/>
            <person name="Rompais M."/>
            <person name="Ayoub D."/>
            <person name="Lane L."/>
            <person name="Bairoch A."/>
            <person name="Van Dorsselaer A."/>
            <person name="Carapito C."/>
        </authorList>
    </citation>
    <scope>IDENTIFICATION BY MASS SPECTROMETRY [LARGE SCALE ANALYSIS]</scope>
</reference>
<reference key="19">
    <citation type="journal article" date="2018" name="Nat. Cell Biol.">
        <title>Deregulation of CRAD-controlled cytoskeleton initiates mucinous colorectal cancer via beta-catenin.</title>
        <authorList>
            <person name="Jung Y.S."/>
            <person name="Wang W."/>
            <person name="Jun S."/>
            <person name="Zhang J."/>
            <person name="Srivastava M."/>
            <person name="Kim M.J."/>
            <person name="Lien E.M."/>
            <person name="Shang J."/>
            <person name="Chen J."/>
            <person name="McCrea P.D."/>
            <person name="Zhang S."/>
            <person name="Park J.I."/>
        </authorList>
    </citation>
    <scope>INTERACTION WITH CRACD</scope>
</reference>
<dbReference type="EMBL" id="U03269">
    <property type="protein sequence ID" value="AAA88848.1"/>
    <property type="molecule type" value="mRNA"/>
</dbReference>
<dbReference type="EMBL" id="BT006735">
    <property type="protein sequence ID" value="AAP35381.1"/>
    <property type="molecule type" value="mRNA"/>
</dbReference>
<dbReference type="EMBL" id="AK294409">
    <property type="protein sequence ID" value="BAG57661.1"/>
    <property type="molecule type" value="mRNA"/>
</dbReference>
<dbReference type="EMBL" id="AC002543">
    <property type="protein sequence ID" value="AAC60382.1"/>
    <property type="molecule type" value="Genomic_DNA"/>
</dbReference>
<dbReference type="EMBL" id="BC005338">
    <property type="protein sequence ID" value="AAH05338.1"/>
    <property type="molecule type" value="mRNA"/>
</dbReference>
<dbReference type="EMBL" id="U03851">
    <property type="protein sequence ID" value="AAC00534.1"/>
    <property type="molecule type" value="mRNA"/>
</dbReference>
<dbReference type="CCDS" id="CCDS5768.1">
    <molecule id="P47755-1"/>
</dbReference>
<dbReference type="PIR" id="G01229">
    <property type="entry name" value="G01229"/>
</dbReference>
<dbReference type="RefSeq" id="NP_006127.1">
    <molecule id="P47755-1"/>
    <property type="nucleotide sequence ID" value="NM_006136.3"/>
</dbReference>
<dbReference type="SMR" id="P47755"/>
<dbReference type="BioGRID" id="107280">
    <property type="interactions" value="443"/>
</dbReference>
<dbReference type="ComplexPortal" id="CPX-8696">
    <property type="entry name" value="F-actin capping protein complex, CAPZA2 variant"/>
</dbReference>
<dbReference type="CORUM" id="P47755"/>
<dbReference type="FunCoup" id="P47755">
    <property type="interactions" value="1995"/>
</dbReference>
<dbReference type="IntAct" id="P47755">
    <property type="interactions" value="352"/>
</dbReference>
<dbReference type="MINT" id="P47755"/>
<dbReference type="STRING" id="9606.ENSP00000354947"/>
<dbReference type="GlyGen" id="P47755">
    <property type="glycosylation" value="1 site, 1 O-linked glycan (1 site)"/>
</dbReference>
<dbReference type="iPTMnet" id="P47755"/>
<dbReference type="MetOSite" id="P47755"/>
<dbReference type="PhosphoSitePlus" id="P47755"/>
<dbReference type="BioMuta" id="CAPZA2"/>
<dbReference type="DMDM" id="1345695"/>
<dbReference type="OGP" id="P47755"/>
<dbReference type="REPRODUCTION-2DPAGE" id="P47755"/>
<dbReference type="jPOST" id="P47755"/>
<dbReference type="MassIVE" id="P47755"/>
<dbReference type="PaxDb" id="9606-ENSP00000354947"/>
<dbReference type="PeptideAtlas" id="P47755"/>
<dbReference type="ProteomicsDB" id="4106"/>
<dbReference type="ProteomicsDB" id="55792">
    <molecule id="P47755-1"/>
</dbReference>
<dbReference type="Pumba" id="P47755"/>
<dbReference type="Antibodypedia" id="2213">
    <property type="antibodies" value="198 antibodies from 26 providers"/>
</dbReference>
<dbReference type="DNASU" id="830"/>
<dbReference type="Ensembl" id="ENST00000361183.8">
    <molecule id="P47755-1"/>
    <property type="protein sequence ID" value="ENSP00000354947.2"/>
    <property type="gene ID" value="ENSG00000198898.16"/>
</dbReference>
<dbReference type="GeneID" id="830"/>
<dbReference type="KEGG" id="hsa:830"/>
<dbReference type="MANE-Select" id="ENST00000361183.8">
    <property type="protein sequence ID" value="ENSP00000354947.2"/>
    <property type="RefSeq nucleotide sequence ID" value="NM_006136.3"/>
    <property type="RefSeq protein sequence ID" value="NP_006127.1"/>
</dbReference>
<dbReference type="UCSC" id="uc003vil.4">
    <molecule id="P47755-1"/>
    <property type="organism name" value="human"/>
</dbReference>
<dbReference type="AGR" id="HGNC:1490"/>
<dbReference type="CTD" id="830"/>
<dbReference type="DisGeNET" id="830"/>
<dbReference type="GeneCards" id="CAPZA2"/>
<dbReference type="HGNC" id="HGNC:1490">
    <property type="gene designation" value="CAPZA2"/>
</dbReference>
<dbReference type="HPA" id="ENSG00000198898">
    <property type="expression patterns" value="Low tissue specificity"/>
</dbReference>
<dbReference type="MIM" id="601571">
    <property type="type" value="gene"/>
</dbReference>
<dbReference type="neXtProt" id="NX_P47755"/>
<dbReference type="OpenTargets" id="ENSG00000198898"/>
<dbReference type="PharmGKB" id="PA26071"/>
<dbReference type="VEuPathDB" id="HostDB:ENSG00000198898"/>
<dbReference type="eggNOG" id="KOG0836">
    <property type="taxonomic scope" value="Eukaryota"/>
</dbReference>
<dbReference type="GeneTree" id="ENSGT00950000183119"/>
<dbReference type="HOGENOM" id="CLU_045161_0_0_1"/>
<dbReference type="InParanoid" id="P47755"/>
<dbReference type="OMA" id="VACIEDH"/>
<dbReference type="OrthoDB" id="340550at2759"/>
<dbReference type="PAN-GO" id="P47755">
    <property type="GO annotations" value="5 GO annotations based on evolutionary models"/>
</dbReference>
<dbReference type="PhylomeDB" id="P47755"/>
<dbReference type="TreeFam" id="TF314822"/>
<dbReference type="PathwayCommons" id="P47755"/>
<dbReference type="Reactome" id="R-HSA-2132295">
    <property type="pathway name" value="MHC class II antigen presentation"/>
</dbReference>
<dbReference type="Reactome" id="R-HSA-3371497">
    <property type="pathway name" value="HSP90 chaperone cycle for steroid hormone receptors (SHR) in the presence of ligand"/>
</dbReference>
<dbReference type="Reactome" id="R-HSA-6807878">
    <property type="pathway name" value="COPI-mediated anterograde transport"/>
</dbReference>
<dbReference type="Reactome" id="R-HSA-6811436">
    <property type="pathway name" value="COPI-independent Golgi-to-ER retrograde traffic"/>
</dbReference>
<dbReference type="Reactome" id="R-HSA-879415">
    <property type="pathway name" value="Advanced glycosylation endproduct receptor signaling"/>
</dbReference>
<dbReference type="Reactome" id="R-HSA-9662360">
    <property type="pathway name" value="Sensory processing of sound by inner hair cells of the cochlea"/>
</dbReference>
<dbReference type="Reactome" id="R-HSA-983231">
    <property type="pathway name" value="Factors involved in megakaryocyte development and platelet production"/>
</dbReference>
<dbReference type="SignaLink" id="P47755"/>
<dbReference type="BioGRID-ORCS" id="830">
    <property type="hits" value="29 hits in 1123 CRISPR screens"/>
</dbReference>
<dbReference type="CD-CODE" id="DEE660B4">
    <property type="entry name" value="Stress granule"/>
</dbReference>
<dbReference type="CD-CODE" id="FB4E32DD">
    <property type="entry name" value="Presynaptic clusters and postsynaptic densities"/>
</dbReference>
<dbReference type="ChiTaRS" id="CAPZA2">
    <property type="organism name" value="human"/>
</dbReference>
<dbReference type="GeneWiki" id="CAPZA2"/>
<dbReference type="GenomeRNAi" id="830"/>
<dbReference type="Pharos" id="P47755">
    <property type="development level" value="Tbio"/>
</dbReference>
<dbReference type="PRO" id="PR:P47755"/>
<dbReference type="Proteomes" id="UP000005640">
    <property type="component" value="Chromosome 7"/>
</dbReference>
<dbReference type="RNAct" id="P47755">
    <property type="molecule type" value="protein"/>
</dbReference>
<dbReference type="Bgee" id="ENSG00000198898">
    <property type="expression patterns" value="Expressed in jejunal mucosa and 216 other cell types or tissues"/>
</dbReference>
<dbReference type="ExpressionAtlas" id="P47755">
    <property type="expression patterns" value="baseline and differential"/>
</dbReference>
<dbReference type="GO" id="GO:0015629">
    <property type="term" value="C:actin cytoskeleton"/>
    <property type="evidence" value="ECO:0000304"/>
    <property type="project" value="ProtInc"/>
</dbReference>
<dbReference type="GO" id="GO:0005903">
    <property type="term" value="C:brush border"/>
    <property type="evidence" value="ECO:0007669"/>
    <property type="project" value="Ensembl"/>
</dbReference>
<dbReference type="GO" id="GO:0030863">
    <property type="term" value="C:cortical cytoskeleton"/>
    <property type="evidence" value="ECO:0000318"/>
    <property type="project" value="GO_Central"/>
</dbReference>
<dbReference type="GO" id="GO:0005829">
    <property type="term" value="C:cytosol"/>
    <property type="evidence" value="ECO:0000304"/>
    <property type="project" value="Reactome"/>
</dbReference>
<dbReference type="GO" id="GO:0070062">
    <property type="term" value="C:extracellular exosome"/>
    <property type="evidence" value="ECO:0007005"/>
    <property type="project" value="UniProtKB"/>
</dbReference>
<dbReference type="GO" id="GO:0005576">
    <property type="term" value="C:extracellular region"/>
    <property type="evidence" value="ECO:0000304"/>
    <property type="project" value="Reactome"/>
</dbReference>
<dbReference type="GO" id="GO:0008290">
    <property type="term" value="C:F-actin capping protein complex"/>
    <property type="evidence" value="ECO:0000318"/>
    <property type="project" value="GO_Central"/>
</dbReference>
<dbReference type="GO" id="GO:0016020">
    <property type="term" value="C:membrane"/>
    <property type="evidence" value="ECO:0007669"/>
    <property type="project" value="Ensembl"/>
</dbReference>
<dbReference type="GO" id="GO:0051015">
    <property type="term" value="F:actin filament binding"/>
    <property type="evidence" value="ECO:0000318"/>
    <property type="project" value="GO_Central"/>
</dbReference>
<dbReference type="GO" id="GO:0030036">
    <property type="term" value="P:actin cytoskeleton organization"/>
    <property type="evidence" value="ECO:0000318"/>
    <property type="project" value="GO_Central"/>
</dbReference>
<dbReference type="GO" id="GO:0051016">
    <property type="term" value="P:barbed-end actin filament capping"/>
    <property type="evidence" value="ECO:0000318"/>
    <property type="project" value="GO_Central"/>
</dbReference>
<dbReference type="GO" id="GO:0065003">
    <property type="term" value="P:protein-containing complex assembly"/>
    <property type="evidence" value="ECO:0000304"/>
    <property type="project" value="ProtInc"/>
</dbReference>
<dbReference type="FunFam" id="3.30.1140.60:FF:000001">
    <property type="entry name" value="F-actin-capping protein subunit alpha"/>
    <property type="match status" value="1"/>
</dbReference>
<dbReference type="FunFam" id="3.90.1150.210:FF:000002">
    <property type="entry name" value="F-actin-capping protein subunit alpha"/>
    <property type="match status" value="1"/>
</dbReference>
<dbReference type="Gene3D" id="3.30.1140.60">
    <property type="entry name" value="F-actin capping protein, alpha subunit"/>
    <property type="match status" value="1"/>
</dbReference>
<dbReference type="Gene3D" id="3.90.1150.210">
    <property type="entry name" value="F-actin capping protein, beta subunit"/>
    <property type="match status" value="1"/>
</dbReference>
<dbReference type="InterPro" id="IPR002189">
    <property type="entry name" value="CapZ_alpha"/>
</dbReference>
<dbReference type="InterPro" id="IPR037282">
    <property type="entry name" value="CapZ_alpha/beta"/>
</dbReference>
<dbReference type="InterPro" id="IPR042276">
    <property type="entry name" value="CapZ_alpha/beta_2"/>
</dbReference>
<dbReference type="InterPro" id="IPR042489">
    <property type="entry name" value="CapZ_alpha_1"/>
</dbReference>
<dbReference type="InterPro" id="IPR017865">
    <property type="entry name" value="F-actin_cap_asu_CS"/>
</dbReference>
<dbReference type="PANTHER" id="PTHR10653">
    <property type="entry name" value="F-ACTIN-CAPPING PROTEIN SUBUNIT ALPHA"/>
    <property type="match status" value="1"/>
</dbReference>
<dbReference type="PANTHER" id="PTHR10653:SF2">
    <property type="entry name" value="F-ACTIN-CAPPING PROTEIN SUBUNIT ALPHA-2"/>
    <property type="match status" value="1"/>
</dbReference>
<dbReference type="Pfam" id="PF01267">
    <property type="entry name" value="F-actin_cap_A"/>
    <property type="match status" value="1"/>
</dbReference>
<dbReference type="PRINTS" id="PR00191">
    <property type="entry name" value="FACTINCAPA"/>
</dbReference>
<dbReference type="SUPFAM" id="SSF90096">
    <property type="entry name" value="Subunits of heterodimeric actin filament capping protein Capz"/>
    <property type="match status" value="1"/>
</dbReference>
<dbReference type="PROSITE" id="PS00748">
    <property type="entry name" value="F_ACTIN_CAPPING_A_1"/>
    <property type="match status" value="1"/>
</dbReference>
<dbReference type="PROSITE" id="PS00749">
    <property type="entry name" value="F_ACTIN_CAPPING_A_2"/>
    <property type="match status" value="1"/>
</dbReference>
<accession>P47755</accession>
<accession>B4DG50</accession>